<organism>
    <name type="scientific">Mycobacterium tuberculosis (strain ATCC 25618 / H37Rv)</name>
    <dbReference type="NCBI Taxonomy" id="83332"/>
    <lineage>
        <taxon>Bacteria</taxon>
        <taxon>Bacillati</taxon>
        <taxon>Actinomycetota</taxon>
        <taxon>Actinomycetes</taxon>
        <taxon>Mycobacteriales</taxon>
        <taxon>Mycobacteriaceae</taxon>
        <taxon>Mycobacterium</taxon>
        <taxon>Mycobacterium tuberculosis complex</taxon>
    </lineage>
</organism>
<accession>P9WHM3</accession>
<accession>L0TDX0</accession>
<accession>P0A5T6</accession>
<accession>Q50453</accession>
<protein>
    <recommendedName>
        <fullName evidence="1">Formyltetrahydrofolate deformylase</fullName>
        <ecNumber evidence="1">3.5.1.10</ecNumber>
    </recommendedName>
    <alternativeName>
        <fullName evidence="1">Formyl-FH(4) hydrolase</fullName>
    </alternativeName>
</protein>
<gene>
    <name evidence="1" type="primary">purU</name>
    <name type="ordered locus">Rv2964</name>
    <name type="ORF">MTCY349.23c</name>
</gene>
<proteinExistence type="evidence at protein level"/>
<sequence length="310" mass="34006">MGKGSMTAHATPNEPDYPPPPGGPPPPADIGRLLLRCHDRPGIIAAVSTFLARAGANIISLDQHSTAPEGGTFLQRAIFHLPGLTAAVDELQRDFGSTVADKFGIDYRFAEAAKPKRVAIMASTEDHCLLDLLWRNRRGELEMSVVMVIANHPDLAAHVRPFGVPFIHIPATRDTRTEAEQRQLQLLSGNVDLVVLARYMQILSPGFLEAIGCPLINIHHSFLPAFTGAAPYQRARERGVKLIGATAHYVTEVLDEGPIIEQDVVRVDHTHTVDDLVRVGADVERAVLSRAVLWHCQDRVIVHHNQTIVF</sequence>
<feature type="chain" id="PRO_0000074964" description="Formyltetrahydrofolate deformylase">
    <location>
        <begin position="1"/>
        <end position="310"/>
    </location>
</feature>
<feature type="domain" description="ACT" evidence="1">
    <location>
        <begin position="32"/>
        <end position="108"/>
    </location>
</feature>
<feature type="region of interest" description="Disordered" evidence="2">
    <location>
        <begin position="1"/>
        <end position="30"/>
    </location>
</feature>
<feature type="compositionally biased region" description="Pro residues" evidence="2">
    <location>
        <begin position="15"/>
        <end position="28"/>
    </location>
</feature>
<feature type="active site" evidence="1">
    <location>
        <position position="255"/>
    </location>
</feature>
<dbReference type="EC" id="3.5.1.10" evidence="1"/>
<dbReference type="EMBL" id="U00024">
    <property type="protein sequence ID" value="AAA50945.1"/>
    <property type="molecule type" value="Genomic_DNA"/>
</dbReference>
<dbReference type="EMBL" id="AL123456">
    <property type="protein sequence ID" value="CCP45768.1"/>
    <property type="molecule type" value="Genomic_DNA"/>
</dbReference>
<dbReference type="PIR" id="A70671">
    <property type="entry name" value="A70671"/>
</dbReference>
<dbReference type="RefSeq" id="NP_217480.1">
    <property type="nucleotide sequence ID" value="NC_000962.3"/>
</dbReference>
<dbReference type="RefSeq" id="WP_003899559.1">
    <property type="nucleotide sequence ID" value="NZ_NVQJ01000015.1"/>
</dbReference>
<dbReference type="SMR" id="P9WHM3"/>
<dbReference type="FunCoup" id="P9WHM3">
    <property type="interactions" value="83"/>
</dbReference>
<dbReference type="STRING" id="83332.Rv2964"/>
<dbReference type="PaxDb" id="83332-Rv2964"/>
<dbReference type="DNASU" id="887338"/>
<dbReference type="GeneID" id="45426952"/>
<dbReference type="GeneID" id="887338"/>
<dbReference type="KEGG" id="mtu:Rv2964"/>
<dbReference type="KEGG" id="mtv:RVBD_2964"/>
<dbReference type="PATRIC" id="fig|83332.111.peg.3302"/>
<dbReference type="TubercuList" id="Rv2964"/>
<dbReference type="eggNOG" id="COG0788">
    <property type="taxonomic scope" value="Bacteria"/>
</dbReference>
<dbReference type="InParanoid" id="P9WHM3"/>
<dbReference type="OrthoDB" id="9806170at2"/>
<dbReference type="PhylomeDB" id="P9WHM3"/>
<dbReference type="UniPathway" id="UPA00074">
    <property type="reaction ID" value="UER00170"/>
</dbReference>
<dbReference type="Proteomes" id="UP000001584">
    <property type="component" value="Chromosome"/>
</dbReference>
<dbReference type="GO" id="GO:0008864">
    <property type="term" value="F:formyltetrahydrofolate deformylase activity"/>
    <property type="evidence" value="ECO:0007669"/>
    <property type="project" value="UniProtKB-UniRule"/>
</dbReference>
<dbReference type="GO" id="GO:0006189">
    <property type="term" value="P:'de novo' IMP biosynthetic process"/>
    <property type="evidence" value="ECO:0007669"/>
    <property type="project" value="UniProtKB-UniRule"/>
</dbReference>
<dbReference type="GO" id="GO:0006730">
    <property type="term" value="P:one-carbon metabolic process"/>
    <property type="evidence" value="ECO:0007669"/>
    <property type="project" value="UniProtKB-KW"/>
</dbReference>
<dbReference type="CDD" id="cd04875">
    <property type="entry name" value="ACT_F4HF-DF"/>
    <property type="match status" value="1"/>
</dbReference>
<dbReference type="CDD" id="cd08648">
    <property type="entry name" value="FMT_core_Formyl-FH4-Hydrolase_C"/>
    <property type="match status" value="1"/>
</dbReference>
<dbReference type="Gene3D" id="3.30.70.260">
    <property type="match status" value="1"/>
</dbReference>
<dbReference type="Gene3D" id="3.40.50.170">
    <property type="entry name" value="Formyl transferase, N-terminal domain"/>
    <property type="match status" value="1"/>
</dbReference>
<dbReference type="HAMAP" id="MF_01927">
    <property type="entry name" value="PurU"/>
    <property type="match status" value="1"/>
</dbReference>
<dbReference type="InterPro" id="IPR045865">
    <property type="entry name" value="ACT-like_dom_sf"/>
</dbReference>
<dbReference type="InterPro" id="IPR002912">
    <property type="entry name" value="ACT_dom"/>
</dbReference>
<dbReference type="InterPro" id="IPR041729">
    <property type="entry name" value="Formyl-FH4-Hydrolase_C"/>
</dbReference>
<dbReference type="InterPro" id="IPR002376">
    <property type="entry name" value="Formyl_transf_N"/>
</dbReference>
<dbReference type="InterPro" id="IPR036477">
    <property type="entry name" value="Formyl_transf_N_sf"/>
</dbReference>
<dbReference type="InterPro" id="IPR004810">
    <property type="entry name" value="PurU"/>
</dbReference>
<dbReference type="InterPro" id="IPR044074">
    <property type="entry name" value="PurU_ACT"/>
</dbReference>
<dbReference type="NCBIfam" id="NF004684">
    <property type="entry name" value="PRK06027.1"/>
    <property type="match status" value="1"/>
</dbReference>
<dbReference type="NCBIfam" id="TIGR00655">
    <property type="entry name" value="PurU"/>
    <property type="match status" value="1"/>
</dbReference>
<dbReference type="PANTHER" id="PTHR42706">
    <property type="entry name" value="FORMYLTETRAHYDROFOLATE DEFORMYLASE"/>
    <property type="match status" value="1"/>
</dbReference>
<dbReference type="PANTHER" id="PTHR42706:SF1">
    <property type="entry name" value="FORMYLTETRAHYDROFOLATE DEFORMYLASE 2, MITOCHONDRIAL"/>
    <property type="match status" value="1"/>
</dbReference>
<dbReference type="Pfam" id="PF01842">
    <property type="entry name" value="ACT"/>
    <property type="match status" value="1"/>
</dbReference>
<dbReference type="Pfam" id="PF00551">
    <property type="entry name" value="Formyl_trans_N"/>
    <property type="match status" value="1"/>
</dbReference>
<dbReference type="PIRSF" id="PIRSF036480">
    <property type="entry name" value="FormyFH4_hydr"/>
    <property type="match status" value="1"/>
</dbReference>
<dbReference type="PRINTS" id="PR01575">
    <property type="entry name" value="FFH4HYDRLASE"/>
</dbReference>
<dbReference type="SUPFAM" id="SSF55021">
    <property type="entry name" value="ACT-like"/>
    <property type="match status" value="1"/>
</dbReference>
<dbReference type="SUPFAM" id="SSF53328">
    <property type="entry name" value="Formyltransferase"/>
    <property type="match status" value="1"/>
</dbReference>
<dbReference type="PROSITE" id="PS51671">
    <property type="entry name" value="ACT"/>
    <property type="match status" value="1"/>
</dbReference>
<keyword id="KW-0378">Hydrolase</keyword>
<keyword id="KW-0554">One-carbon metabolism</keyword>
<keyword id="KW-0658">Purine biosynthesis</keyword>
<keyword id="KW-1185">Reference proteome</keyword>
<reference key="1">
    <citation type="submission" date="1994-01" db="EMBL/GenBank/DDBJ databases">
        <authorList>
            <person name="Smith D.R."/>
            <person name="Robison K."/>
        </authorList>
    </citation>
    <scope>NUCLEOTIDE SEQUENCE [GENOMIC DNA]</scope>
</reference>
<reference key="2">
    <citation type="journal article" date="1998" name="Nature">
        <title>Deciphering the biology of Mycobacterium tuberculosis from the complete genome sequence.</title>
        <authorList>
            <person name="Cole S.T."/>
            <person name="Brosch R."/>
            <person name="Parkhill J."/>
            <person name="Garnier T."/>
            <person name="Churcher C.M."/>
            <person name="Harris D.E."/>
            <person name="Gordon S.V."/>
            <person name="Eiglmeier K."/>
            <person name="Gas S."/>
            <person name="Barry C.E. III"/>
            <person name="Tekaia F."/>
            <person name="Badcock K."/>
            <person name="Basham D."/>
            <person name="Brown D."/>
            <person name="Chillingworth T."/>
            <person name="Connor R."/>
            <person name="Davies R.M."/>
            <person name="Devlin K."/>
            <person name="Feltwell T."/>
            <person name="Gentles S."/>
            <person name="Hamlin N."/>
            <person name="Holroyd S."/>
            <person name="Hornsby T."/>
            <person name="Jagels K."/>
            <person name="Krogh A."/>
            <person name="McLean J."/>
            <person name="Moule S."/>
            <person name="Murphy L.D."/>
            <person name="Oliver S."/>
            <person name="Osborne J."/>
            <person name="Quail M.A."/>
            <person name="Rajandream M.A."/>
            <person name="Rogers J."/>
            <person name="Rutter S."/>
            <person name="Seeger K."/>
            <person name="Skelton S."/>
            <person name="Squares S."/>
            <person name="Squares R."/>
            <person name="Sulston J.E."/>
            <person name="Taylor K."/>
            <person name="Whitehead S."/>
            <person name="Barrell B.G."/>
        </authorList>
    </citation>
    <scope>NUCLEOTIDE SEQUENCE [LARGE SCALE GENOMIC DNA]</scope>
    <source>
        <strain>ATCC 25618 / H37Rv</strain>
    </source>
</reference>
<reference key="3">
    <citation type="journal article" date="2011" name="Mol. Cell. Proteomics">
        <title>Proteogenomic analysis of Mycobacterium tuberculosis by high resolution mass spectrometry.</title>
        <authorList>
            <person name="Kelkar D.S."/>
            <person name="Kumar D."/>
            <person name="Kumar P."/>
            <person name="Balakrishnan L."/>
            <person name="Muthusamy B."/>
            <person name="Yadav A.K."/>
            <person name="Shrivastava P."/>
            <person name="Marimuthu A."/>
            <person name="Anand S."/>
            <person name="Sundaram H."/>
            <person name="Kingsbury R."/>
            <person name="Harsha H.C."/>
            <person name="Nair B."/>
            <person name="Prasad T.S."/>
            <person name="Chauhan D.S."/>
            <person name="Katoch K."/>
            <person name="Katoch V.M."/>
            <person name="Kumar P."/>
            <person name="Chaerkady R."/>
            <person name="Ramachandran S."/>
            <person name="Dash D."/>
            <person name="Pandey A."/>
        </authorList>
    </citation>
    <scope>IDENTIFICATION BY MASS SPECTROMETRY [LARGE SCALE ANALYSIS]</scope>
    <source>
        <strain>ATCC 25618 / H37Rv</strain>
    </source>
</reference>
<evidence type="ECO:0000255" key="1">
    <source>
        <dbReference type="HAMAP-Rule" id="MF_01927"/>
    </source>
</evidence>
<evidence type="ECO:0000256" key="2">
    <source>
        <dbReference type="SAM" id="MobiDB-lite"/>
    </source>
</evidence>
<comment type="function">
    <text evidence="1">Catalyzes the hydrolysis of 10-formyltetrahydrofolate (formyl-FH4) to formate and tetrahydrofolate (FH4).</text>
</comment>
<comment type="catalytic activity">
    <reaction evidence="1">
        <text>(6R)-10-formyltetrahydrofolate + H2O = (6S)-5,6,7,8-tetrahydrofolate + formate + H(+)</text>
        <dbReference type="Rhea" id="RHEA:19833"/>
        <dbReference type="ChEBI" id="CHEBI:15377"/>
        <dbReference type="ChEBI" id="CHEBI:15378"/>
        <dbReference type="ChEBI" id="CHEBI:15740"/>
        <dbReference type="ChEBI" id="CHEBI:57453"/>
        <dbReference type="ChEBI" id="CHEBI:195366"/>
        <dbReference type="EC" id="3.5.1.10"/>
    </reaction>
</comment>
<comment type="pathway">
    <text evidence="1">Purine metabolism; IMP biosynthesis via de novo pathway; formate from 10-formyl-5,6,7,8-tetrahydrofolate: step 1/1.</text>
</comment>
<comment type="similarity">
    <text evidence="1">Belongs to the PurU family.</text>
</comment>
<name>PURU_MYCTU</name>